<feature type="chain" id="PRO_1000050798" description="Probable sugar efflux transporter">
    <location>
        <begin position="1"/>
        <end position="396"/>
    </location>
</feature>
<feature type="transmembrane region" description="Helical" evidence="1">
    <location>
        <begin position="15"/>
        <end position="35"/>
    </location>
</feature>
<feature type="transmembrane region" description="Helical" evidence="1">
    <location>
        <begin position="51"/>
        <end position="71"/>
    </location>
</feature>
<feature type="transmembrane region" description="Helical" evidence="1">
    <location>
        <begin position="84"/>
        <end position="104"/>
    </location>
</feature>
<feature type="transmembrane region" description="Helical" evidence="1">
    <location>
        <begin position="109"/>
        <end position="129"/>
    </location>
</feature>
<feature type="transmembrane region" description="Helical" evidence="1">
    <location>
        <begin position="137"/>
        <end position="157"/>
    </location>
</feature>
<feature type="transmembrane region" description="Helical" evidence="1">
    <location>
        <begin position="168"/>
        <end position="188"/>
    </location>
</feature>
<feature type="transmembrane region" description="Helical" evidence="1">
    <location>
        <begin position="209"/>
        <end position="229"/>
    </location>
</feature>
<feature type="transmembrane region" description="Helical" evidence="1">
    <location>
        <begin position="245"/>
        <end position="265"/>
    </location>
</feature>
<feature type="transmembrane region" description="Helical" evidence="1">
    <location>
        <begin position="276"/>
        <end position="296"/>
    </location>
</feature>
<feature type="transmembrane region" description="Helical" evidence="1">
    <location>
        <begin position="297"/>
        <end position="317"/>
    </location>
</feature>
<feature type="transmembrane region" description="Helical" evidence="1">
    <location>
        <begin position="333"/>
        <end position="353"/>
    </location>
</feature>
<feature type="transmembrane region" description="Helical" evidence="1">
    <location>
        <begin position="365"/>
        <end position="385"/>
    </location>
</feature>
<dbReference type="EMBL" id="CP000672">
    <property type="protein sequence ID" value="ABQ99645.1"/>
    <property type="molecule type" value="Genomic_DNA"/>
</dbReference>
<dbReference type="SMR" id="A5UFU0"/>
<dbReference type="KEGG" id="hiq:CGSHiGG_03255"/>
<dbReference type="HOGENOM" id="CLU_001265_61_1_6"/>
<dbReference type="Proteomes" id="UP000001990">
    <property type="component" value="Chromosome"/>
</dbReference>
<dbReference type="GO" id="GO:0005886">
    <property type="term" value="C:plasma membrane"/>
    <property type="evidence" value="ECO:0007669"/>
    <property type="project" value="UniProtKB-SubCell"/>
</dbReference>
<dbReference type="GO" id="GO:0015144">
    <property type="term" value="F:carbohydrate transmembrane transporter activity"/>
    <property type="evidence" value="ECO:0007669"/>
    <property type="project" value="UniProtKB-UniRule"/>
</dbReference>
<dbReference type="CDD" id="cd17324">
    <property type="entry name" value="MFS_NepI_like"/>
    <property type="match status" value="1"/>
</dbReference>
<dbReference type="Gene3D" id="1.20.1250.20">
    <property type="entry name" value="MFS general substrate transporter like domains"/>
    <property type="match status" value="1"/>
</dbReference>
<dbReference type="HAMAP" id="MF_00517">
    <property type="entry name" value="MFS_SotB"/>
    <property type="match status" value="1"/>
</dbReference>
<dbReference type="InterPro" id="IPR011701">
    <property type="entry name" value="MFS"/>
</dbReference>
<dbReference type="InterPro" id="IPR020846">
    <property type="entry name" value="MFS_dom"/>
</dbReference>
<dbReference type="InterPro" id="IPR050189">
    <property type="entry name" value="MFS_Efflux_Transporters"/>
</dbReference>
<dbReference type="InterPro" id="IPR036259">
    <property type="entry name" value="MFS_trans_sf"/>
</dbReference>
<dbReference type="InterPro" id="IPR023495">
    <property type="entry name" value="Sugar_effux_transptr_put"/>
</dbReference>
<dbReference type="NCBIfam" id="NF002921">
    <property type="entry name" value="PRK03545.1"/>
    <property type="match status" value="1"/>
</dbReference>
<dbReference type="PANTHER" id="PTHR43124">
    <property type="entry name" value="PURINE EFFLUX PUMP PBUE"/>
    <property type="match status" value="1"/>
</dbReference>
<dbReference type="PANTHER" id="PTHR43124:SF4">
    <property type="entry name" value="SUGAR EFFLUX TRANSPORTER"/>
    <property type="match status" value="1"/>
</dbReference>
<dbReference type="Pfam" id="PF07690">
    <property type="entry name" value="MFS_1"/>
    <property type="match status" value="1"/>
</dbReference>
<dbReference type="SUPFAM" id="SSF103473">
    <property type="entry name" value="MFS general substrate transporter"/>
    <property type="match status" value="1"/>
</dbReference>
<dbReference type="PROSITE" id="PS50850">
    <property type="entry name" value="MFS"/>
    <property type="match status" value="1"/>
</dbReference>
<protein>
    <recommendedName>
        <fullName evidence="1">Probable sugar efflux transporter</fullName>
    </recommendedName>
</protein>
<organism>
    <name type="scientific">Haemophilus influenzae (strain PittGG)</name>
    <dbReference type="NCBI Taxonomy" id="374931"/>
    <lineage>
        <taxon>Bacteria</taxon>
        <taxon>Pseudomonadati</taxon>
        <taxon>Pseudomonadota</taxon>
        <taxon>Gammaproteobacteria</taxon>
        <taxon>Pasteurellales</taxon>
        <taxon>Pasteurellaceae</taxon>
        <taxon>Haemophilus</taxon>
    </lineage>
</organism>
<comment type="function">
    <text evidence="1">Involved in the efflux of sugars. The physiological role may be the reduction of the intracellular concentration of toxic sugars or sugar metabolites.</text>
</comment>
<comment type="subcellular location">
    <subcellularLocation>
        <location evidence="1">Cell inner membrane</location>
        <topology evidence="1">Multi-pass membrane protein</topology>
    </subcellularLocation>
</comment>
<comment type="similarity">
    <text evidence="1">Belongs to the major facilitator superfamily. SotB (TC 2.A.1.2) family.</text>
</comment>
<keyword id="KW-0997">Cell inner membrane</keyword>
<keyword id="KW-1003">Cell membrane</keyword>
<keyword id="KW-0472">Membrane</keyword>
<keyword id="KW-0762">Sugar transport</keyword>
<keyword id="KW-0812">Transmembrane</keyword>
<keyword id="KW-1133">Transmembrane helix</keyword>
<keyword id="KW-0813">Transport</keyword>
<reference key="1">
    <citation type="journal article" date="2007" name="Genome Biol.">
        <title>Characterization and modeling of the Haemophilus influenzae core and supragenomes based on the complete genomic sequences of Rd and 12 clinical nontypeable strains.</title>
        <authorList>
            <person name="Hogg J.S."/>
            <person name="Hu F.Z."/>
            <person name="Janto B."/>
            <person name="Boissy R."/>
            <person name="Hayes J."/>
            <person name="Keefe R."/>
            <person name="Post J.C."/>
            <person name="Ehrlich G.D."/>
        </authorList>
    </citation>
    <scope>NUCLEOTIDE SEQUENCE [LARGE SCALE GENOMIC DNA]</scope>
    <source>
        <strain>PittGG</strain>
    </source>
</reference>
<proteinExistence type="inferred from homology"/>
<accession>A5UFU0</accession>
<sequence length="396" mass="43371">MPLYLKAEKIQSWRVLIMACAGFIFNTTEFVPVAMLSDIAQSFDMQTADTGLMMTVYAWTVLIMSLPAMLATGNMERKSLLIKLFIIFIVGHILSVIAWNFWILLLARMCIALAHSVFWSITASLVMRISPKHKKTQALGMLAIGTALATILGLPIGRIVGQLVGWRVTFGIIAVLALSIMFLIIRLLPNLPSKNAGSIASLPLLAKRPLLLWLYVTTAIVISAHFTAYTYIEPFMIDVGHLDPNFATAVLLVFGFSGIAASLLFNRLYRFAPTKFIVVSMSLLMFSLLLLLFSTETIIAMFSLVFIWGIGISCIGLSLQMRVLKLAPDATDVATAIYSGIFNAGIGAGALFGNLATTYLGLNEIGYTGAALGLIGFIIFITTHLKYRHTFLLQNK</sequence>
<name>SOTB_HAEIG</name>
<evidence type="ECO:0000255" key="1">
    <source>
        <dbReference type="HAMAP-Rule" id="MF_00517"/>
    </source>
</evidence>
<gene>
    <name evidence="1" type="primary">sotB</name>
    <name type="ordered locus">CGSHiGG_03255</name>
</gene>